<accession>Q6EBC2</accession>
<accession>A2RUQ1</accession>
<dbReference type="EMBL" id="AY499343">
    <property type="protein sequence ID" value="AAS86448.1"/>
    <property type="molecule type" value="mRNA"/>
</dbReference>
<dbReference type="EMBL" id="BC132998">
    <property type="protein sequence ID" value="AAI32999.1"/>
    <property type="molecule type" value="mRNA"/>
</dbReference>
<dbReference type="EMBL" id="BC133000">
    <property type="protein sequence ID" value="AAI33001.1"/>
    <property type="molecule type" value="mRNA"/>
</dbReference>
<dbReference type="CCDS" id="CCDS31919.1"/>
<dbReference type="RefSeq" id="NP_001014358.1">
    <property type="nucleotide sequence ID" value="NM_001014336.2"/>
</dbReference>
<dbReference type="SMR" id="Q6EBC2"/>
<dbReference type="BioGRID" id="132118">
    <property type="interactions" value="46"/>
</dbReference>
<dbReference type="CORUM" id="Q6EBC2"/>
<dbReference type="FunCoup" id="Q6EBC2">
    <property type="interactions" value="377"/>
</dbReference>
<dbReference type="IntAct" id="Q6EBC2">
    <property type="interactions" value="14"/>
</dbReference>
<dbReference type="STRING" id="9606.ENSP00000366234"/>
<dbReference type="GlyCosmos" id="Q6EBC2">
    <property type="glycosylation" value="2 sites, No reported glycans"/>
</dbReference>
<dbReference type="GlyGen" id="Q6EBC2">
    <property type="glycosylation" value="2 sites"/>
</dbReference>
<dbReference type="BioMuta" id="IL31"/>
<dbReference type="DMDM" id="74709232"/>
<dbReference type="MassIVE" id="Q6EBC2"/>
<dbReference type="PaxDb" id="9606-ENSP00000366234"/>
<dbReference type="PeptideAtlas" id="Q6EBC2"/>
<dbReference type="ProteomicsDB" id="66275"/>
<dbReference type="Antibodypedia" id="19131">
    <property type="antibodies" value="454 antibodies from 39 providers"/>
</dbReference>
<dbReference type="DNASU" id="386653"/>
<dbReference type="Ensembl" id="ENST00000377035.2">
    <property type="protein sequence ID" value="ENSP00000366234.1"/>
    <property type="gene ID" value="ENSG00000204671.2"/>
</dbReference>
<dbReference type="GeneID" id="386653"/>
<dbReference type="KEGG" id="hsa:386653"/>
<dbReference type="MANE-Select" id="ENST00000377035.2">
    <property type="protein sequence ID" value="ENSP00000366234.1"/>
    <property type="RefSeq nucleotide sequence ID" value="NM_001014336.2"/>
    <property type="RefSeq protein sequence ID" value="NP_001014358.1"/>
</dbReference>
<dbReference type="UCSC" id="uc001ubv.3">
    <property type="organism name" value="human"/>
</dbReference>
<dbReference type="AGR" id="HGNC:19372"/>
<dbReference type="CTD" id="386653"/>
<dbReference type="DisGeNET" id="386653"/>
<dbReference type="GeneCards" id="IL31"/>
<dbReference type="HGNC" id="HGNC:19372">
    <property type="gene designation" value="IL31"/>
</dbReference>
<dbReference type="HPA" id="ENSG00000204671">
    <property type="expression patterns" value="Not detected"/>
</dbReference>
<dbReference type="MIM" id="609509">
    <property type="type" value="gene"/>
</dbReference>
<dbReference type="neXtProt" id="NX_Q6EBC2"/>
<dbReference type="OpenTargets" id="ENSG00000204671"/>
<dbReference type="PharmGKB" id="PA134957950"/>
<dbReference type="VEuPathDB" id="HostDB:ENSG00000204671"/>
<dbReference type="eggNOG" id="ENOG502TF53">
    <property type="taxonomic scope" value="Eukaryota"/>
</dbReference>
<dbReference type="GeneTree" id="ENSGT00390000018074"/>
<dbReference type="HOGENOM" id="CLU_1660075_0_0_1"/>
<dbReference type="InParanoid" id="Q6EBC2"/>
<dbReference type="OMA" id="PYFRAIR"/>
<dbReference type="OrthoDB" id="9837064at2759"/>
<dbReference type="PAN-GO" id="Q6EBC2">
    <property type="GO annotations" value="3 GO annotations based on evolutionary models"/>
</dbReference>
<dbReference type="PhylomeDB" id="Q6EBC2"/>
<dbReference type="TreeFam" id="TF339844"/>
<dbReference type="PathwayCommons" id="Q6EBC2"/>
<dbReference type="Reactome" id="R-HSA-6788467">
    <property type="pathway name" value="IL-6-type cytokine receptor ligand interactions"/>
</dbReference>
<dbReference type="SignaLink" id="Q6EBC2"/>
<dbReference type="SIGNOR" id="Q6EBC2"/>
<dbReference type="BioGRID-ORCS" id="386653">
    <property type="hits" value="14 hits in 1135 CRISPR screens"/>
</dbReference>
<dbReference type="GeneWiki" id="Interleukin_31"/>
<dbReference type="GenomeRNAi" id="386653"/>
<dbReference type="Pharos" id="Q6EBC2">
    <property type="development level" value="Tbio"/>
</dbReference>
<dbReference type="PRO" id="PR:Q6EBC2"/>
<dbReference type="Proteomes" id="UP000005640">
    <property type="component" value="Chromosome 12"/>
</dbReference>
<dbReference type="RNAct" id="Q6EBC2">
    <property type="molecule type" value="protein"/>
</dbReference>
<dbReference type="Bgee" id="ENSG00000204671">
    <property type="expression patterns" value="Expressed in mucosa of stomach and 3 other cell types or tissues"/>
</dbReference>
<dbReference type="GO" id="GO:0005576">
    <property type="term" value="C:extracellular region"/>
    <property type="evidence" value="ECO:0000304"/>
    <property type="project" value="Reactome"/>
</dbReference>
<dbReference type="GO" id="GO:0005615">
    <property type="term" value="C:extracellular space"/>
    <property type="evidence" value="ECO:0000314"/>
    <property type="project" value="MGI"/>
</dbReference>
<dbReference type="GO" id="GO:0005125">
    <property type="term" value="F:cytokine activity"/>
    <property type="evidence" value="ECO:0000318"/>
    <property type="project" value="GO_Central"/>
</dbReference>
<dbReference type="GO" id="GO:0005126">
    <property type="term" value="F:cytokine receptor binding"/>
    <property type="evidence" value="ECO:0000318"/>
    <property type="project" value="GO_Central"/>
</dbReference>
<dbReference type="GO" id="GO:0002376">
    <property type="term" value="P:immune system process"/>
    <property type="evidence" value="ECO:0007669"/>
    <property type="project" value="UniProtKB-KW"/>
</dbReference>
<dbReference type="InterPro" id="IPR027987">
    <property type="entry name" value="IL-31"/>
</dbReference>
<dbReference type="PANTHER" id="PTHR38652">
    <property type="entry name" value="INTERLEUKIN-31"/>
    <property type="match status" value="1"/>
</dbReference>
<dbReference type="PANTHER" id="PTHR38652:SF1">
    <property type="entry name" value="INTERLEUKIN-31"/>
    <property type="match status" value="1"/>
</dbReference>
<dbReference type="Pfam" id="PF15209">
    <property type="entry name" value="IL31"/>
    <property type="match status" value="1"/>
</dbReference>
<comment type="function">
    <text evidence="1 3">Activates STAT3 and possibly STAT1 and STAT5 through the IL31 heterodimeric receptor composed of IL31RA and OSMR (PubMed:15184896). May function in skin immunity (PubMed:15184896). Enhances myeloid progenitor cell survival in vitro (By similarity). Induces RETNLA and serum amyloid A protein expression in macrophages (By similarity).</text>
</comment>
<comment type="interaction">
    <interactant intactId="EBI-18286692">
        <id>Q6EBC2</id>
    </interactant>
    <interactant intactId="EBI-741158">
        <id>Q96HA8</id>
        <label>NTAQ1</label>
    </interactant>
    <organismsDiffer>false</organismsDiffer>
    <experiments>3</experiments>
</comment>
<comment type="subcellular location">
    <subcellularLocation>
        <location evidence="6">Secreted</location>
    </subcellularLocation>
</comment>
<comment type="tissue specificity">
    <text evidence="3">Detected at low levels in testis, bone marrow, skeletal muscle, kidney, colon, thymus, small intestine and trachea.</text>
</comment>
<comment type="induction">
    <text evidence="4 5">Up-regulated in skin homing T-cells of patients with atopic dermatitis (AD) and in activated circulating T-cells. Up-regulated in lesional biopsies of patients with allergic contact dermatitis (ACD).</text>
</comment>
<protein>
    <recommendedName>
        <fullName>Interleukin-31</fullName>
        <shortName>IL-31</shortName>
    </recommendedName>
</protein>
<proteinExistence type="evidence at protein level"/>
<organism>
    <name type="scientific">Homo sapiens</name>
    <name type="common">Human</name>
    <dbReference type="NCBI Taxonomy" id="9606"/>
    <lineage>
        <taxon>Eukaryota</taxon>
        <taxon>Metazoa</taxon>
        <taxon>Chordata</taxon>
        <taxon>Craniata</taxon>
        <taxon>Vertebrata</taxon>
        <taxon>Euteleostomi</taxon>
        <taxon>Mammalia</taxon>
        <taxon>Eutheria</taxon>
        <taxon>Euarchontoglires</taxon>
        <taxon>Primates</taxon>
        <taxon>Haplorrhini</taxon>
        <taxon>Catarrhini</taxon>
        <taxon>Hominidae</taxon>
        <taxon>Homo</taxon>
    </lineage>
</organism>
<reference key="1">
    <citation type="journal article" date="2004" name="Nat. Immunol.">
        <title>Interleukin 31, a cytokine produced by activated T cells, induces dermatitis in mice.</title>
        <authorList>
            <person name="Dillon S.R."/>
            <person name="Sprecher C."/>
            <person name="Hammond A."/>
            <person name="Bilsborough J."/>
            <person name="Rosenfeld-Franklin M."/>
            <person name="Presnell S.R."/>
            <person name="Haugen H.S."/>
            <person name="Maurer M."/>
            <person name="Harder B."/>
            <person name="Johnston J."/>
            <person name="Bort S."/>
            <person name="Mudri S."/>
            <person name="Kuijper J.L."/>
            <person name="Bukowski T."/>
            <person name="Shea P."/>
            <person name="Dong D.L."/>
            <person name="Dasovich M."/>
            <person name="Grant F.J."/>
            <person name="Lockwood L."/>
            <person name="Levin S.D."/>
            <person name="LeCiel C."/>
            <person name="Waggie K."/>
            <person name="Day H."/>
            <person name="Topouzis S."/>
            <person name="Kramer J."/>
            <person name="Kuestner R."/>
            <person name="Chen Z."/>
            <person name="Foster D."/>
            <person name="Parrish-Novak J."/>
            <person name="Gross J.A."/>
        </authorList>
    </citation>
    <scope>NUCLEOTIDE SEQUENCE [MRNA]</scope>
    <scope>FUNCTION</scope>
    <scope>TISSUE SPECIFICITY</scope>
    <source>
        <tissue>Peripheral blood</tissue>
    </source>
</reference>
<reference key="2">
    <citation type="journal article" date="2004" name="Genome Res.">
        <title>The status, quality, and expansion of the NIH full-length cDNA project: the Mammalian Gene Collection (MGC).</title>
        <authorList>
            <consortium name="The MGC Project Team"/>
        </authorList>
    </citation>
    <scope>NUCLEOTIDE SEQUENCE [LARGE SCALE MRNA]</scope>
</reference>
<reference key="3">
    <citation type="journal article" date="2006" name="J. Allergy Clin. Immunol.">
        <title>IL-31 is associated with cutaneous lymphocyte antigen-positive skin homing T cells in patients with atopic dermatitis.</title>
        <authorList>
            <person name="Bilsborough J."/>
            <person name="Leung D.Y.M."/>
            <person name="Maurer M."/>
            <person name="Howell M."/>
            <person name="Boguniewicz M."/>
            <person name="Yao L."/>
            <person name="Storey H."/>
            <person name="LeCiel C."/>
            <person name="Harder B."/>
            <person name="Gross J.A."/>
        </authorList>
    </citation>
    <scope>INDUCTION</scope>
</reference>
<reference key="4">
    <citation type="journal article" date="2006" name="J. Allergy Clin. Immunol.">
        <title>Enhanced expression levels of IL-31 correlate with IL-4 and IL-13 in atopic and allergic contact dermatitis.</title>
        <authorList>
            <person name="Neis M.M."/>
            <person name="Peters B."/>
            <person name="Dreuw A."/>
            <person name="Wenzel J."/>
            <person name="Bieber T."/>
            <person name="Mauch C."/>
            <person name="Krieg T."/>
            <person name="Stanzel S."/>
            <person name="Heinrich P.C."/>
            <person name="Merk H.F."/>
            <person name="Bosio A."/>
            <person name="Baron J.M."/>
            <person name="Hermanns H.M."/>
        </authorList>
    </citation>
    <scope>INDUCTION</scope>
</reference>
<keyword id="KW-0202">Cytokine</keyword>
<keyword id="KW-0325">Glycoprotein</keyword>
<keyword id="KW-0391">Immunity</keyword>
<keyword id="KW-1185">Reference proteome</keyword>
<keyword id="KW-0964">Secreted</keyword>
<keyword id="KW-0732">Signal</keyword>
<gene>
    <name type="primary">IL31</name>
</gene>
<evidence type="ECO:0000250" key="1">
    <source>
        <dbReference type="UniProtKB" id="Q6EAL8"/>
    </source>
</evidence>
<evidence type="ECO:0000255" key="2"/>
<evidence type="ECO:0000269" key="3">
    <source>
    </source>
</evidence>
<evidence type="ECO:0000269" key="4">
    <source>
    </source>
</evidence>
<evidence type="ECO:0000269" key="5">
    <source>
    </source>
</evidence>
<evidence type="ECO:0000305" key="6"/>
<name>IL31_HUMAN</name>
<sequence>MASHSGPSTSVLFLFCCLGGWLASHTLPVRLLRPSDDVQKIVEELQSLSKMLLKDVEEEKGVLVSQNYTLPCLSPDAQPPNNIHSPAIRAYLKTIRQLDNKSVIDEIIEHLDKLIFQDAPETNISVPTDTHECKRFILTISQQFSECMDLALKSLTSGAQQATT</sequence>
<feature type="signal peptide" evidence="2">
    <location>
        <begin position="1"/>
        <end position="23"/>
    </location>
</feature>
<feature type="chain" id="PRO_0000274570" description="Interleukin-31">
    <location>
        <begin position="24"/>
        <end position="164"/>
    </location>
</feature>
<feature type="glycosylation site" description="N-linked (GlcNAc...) asparagine" evidence="2">
    <location>
        <position position="67"/>
    </location>
</feature>
<feature type="glycosylation site" description="N-linked (GlcNAc...) asparagine" evidence="2">
    <location>
        <position position="100"/>
    </location>
</feature>